<reference key="1">
    <citation type="submission" date="2008-06" db="EMBL/GenBank/DDBJ databases">
        <title>Complete sequence of chromosome of Prosthecochloris aestuarii DSM 271.</title>
        <authorList>
            <consortium name="US DOE Joint Genome Institute"/>
            <person name="Lucas S."/>
            <person name="Copeland A."/>
            <person name="Lapidus A."/>
            <person name="Glavina del Rio T."/>
            <person name="Dalin E."/>
            <person name="Tice H."/>
            <person name="Bruce D."/>
            <person name="Goodwin L."/>
            <person name="Pitluck S."/>
            <person name="Schmutz J."/>
            <person name="Larimer F."/>
            <person name="Land M."/>
            <person name="Hauser L."/>
            <person name="Kyrpides N."/>
            <person name="Anderson I."/>
            <person name="Liu Z."/>
            <person name="Li T."/>
            <person name="Zhao F."/>
            <person name="Overmann J."/>
            <person name="Bryant D.A."/>
            <person name="Richardson P."/>
        </authorList>
    </citation>
    <scope>NUCLEOTIDE SEQUENCE [LARGE SCALE GENOMIC DNA]</scope>
    <source>
        <strain>DSM 271 / SK 413</strain>
    </source>
</reference>
<keyword id="KW-0067">ATP-binding</keyword>
<keyword id="KW-0173">Coenzyme A biosynthesis</keyword>
<keyword id="KW-0963">Cytoplasm</keyword>
<keyword id="KW-0460">Magnesium</keyword>
<keyword id="KW-0547">Nucleotide-binding</keyword>
<keyword id="KW-0548">Nucleotidyltransferase</keyword>
<keyword id="KW-0808">Transferase</keyword>
<evidence type="ECO:0000255" key="1">
    <source>
        <dbReference type="HAMAP-Rule" id="MF_00151"/>
    </source>
</evidence>
<protein>
    <recommendedName>
        <fullName evidence="1">Phosphopantetheine adenylyltransferase</fullName>
        <ecNumber evidence="1">2.7.7.3</ecNumber>
    </recommendedName>
    <alternativeName>
        <fullName evidence="1">Dephospho-CoA pyrophosphorylase</fullName>
    </alternativeName>
    <alternativeName>
        <fullName evidence="1">Pantetheine-phosphate adenylyltransferase</fullName>
        <shortName evidence="1">PPAT</shortName>
    </alternativeName>
</protein>
<name>COAD_PROA2</name>
<comment type="function">
    <text evidence="1">Reversibly transfers an adenylyl group from ATP to 4'-phosphopantetheine, yielding dephospho-CoA (dPCoA) and pyrophosphate.</text>
</comment>
<comment type="catalytic activity">
    <reaction evidence="1">
        <text>(R)-4'-phosphopantetheine + ATP + H(+) = 3'-dephospho-CoA + diphosphate</text>
        <dbReference type="Rhea" id="RHEA:19801"/>
        <dbReference type="ChEBI" id="CHEBI:15378"/>
        <dbReference type="ChEBI" id="CHEBI:30616"/>
        <dbReference type="ChEBI" id="CHEBI:33019"/>
        <dbReference type="ChEBI" id="CHEBI:57328"/>
        <dbReference type="ChEBI" id="CHEBI:61723"/>
        <dbReference type="EC" id="2.7.7.3"/>
    </reaction>
</comment>
<comment type="cofactor">
    <cofactor evidence="1">
        <name>Mg(2+)</name>
        <dbReference type="ChEBI" id="CHEBI:18420"/>
    </cofactor>
</comment>
<comment type="pathway">
    <text evidence="1">Cofactor biosynthesis; coenzyme A biosynthesis; CoA from (R)-pantothenate: step 4/5.</text>
</comment>
<comment type="subunit">
    <text evidence="1">Homohexamer.</text>
</comment>
<comment type="subcellular location">
    <subcellularLocation>
        <location evidence="1">Cytoplasm</location>
    </subcellularLocation>
</comment>
<comment type="similarity">
    <text evidence="1">Belongs to the bacterial CoaD family.</text>
</comment>
<proteinExistence type="inferred from homology"/>
<gene>
    <name evidence="1" type="primary">coaD</name>
    <name type="ordered locus">Paes_1371</name>
</gene>
<feature type="chain" id="PRO_1000096823" description="Phosphopantetheine adenylyltransferase">
    <location>
        <begin position="1"/>
        <end position="168"/>
    </location>
</feature>
<feature type="binding site" evidence="1">
    <location>
        <begin position="10"/>
        <end position="11"/>
    </location>
    <ligand>
        <name>ATP</name>
        <dbReference type="ChEBI" id="CHEBI:30616"/>
    </ligand>
</feature>
<feature type="binding site" evidence="1">
    <location>
        <position position="10"/>
    </location>
    <ligand>
        <name>substrate</name>
    </ligand>
</feature>
<feature type="binding site" evidence="1">
    <location>
        <position position="18"/>
    </location>
    <ligand>
        <name>ATP</name>
        <dbReference type="ChEBI" id="CHEBI:30616"/>
    </ligand>
</feature>
<feature type="binding site" evidence="1">
    <location>
        <position position="42"/>
    </location>
    <ligand>
        <name>substrate</name>
    </ligand>
</feature>
<feature type="binding site" evidence="1">
    <location>
        <position position="75"/>
    </location>
    <ligand>
        <name>substrate</name>
    </ligand>
</feature>
<feature type="binding site" evidence="1">
    <location>
        <position position="89"/>
    </location>
    <ligand>
        <name>substrate</name>
    </ligand>
</feature>
<feature type="binding site" evidence="1">
    <location>
        <begin position="90"/>
        <end position="92"/>
    </location>
    <ligand>
        <name>ATP</name>
        <dbReference type="ChEBI" id="CHEBI:30616"/>
    </ligand>
</feature>
<feature type="binding site" evidence="1">
    <location>
        <position position="100"/>
    </location>
    <ligand>
        <name>ATP</name>
        <dbReference type="ChEBI" id="CHEBI:30616"/>
    </ligand>
</feature>
<feature type="binding site" evidence="1">
    <location>
        <begin position="125"/>
        <end position="131"/>
    </location>
    <ligand>
        <name>ATP</name>
        <dbReference type="ChEBI" id="CHEBI:30616"/>
    </ligand>
</feature>
<feature type="site" description="Transition state stabilizer" evidence="1">
    <location>
        <position position="18"/>
    </location>
</feature>
<sequence length="168" mass="19094">MTQIAIYPGTFDPFTNGHLDVFERASNIFDSVVVVIAENSRKNTLFSVDERREMIEKIIGRYPGARVEVLHDGLLADYARQVGAKAIVRGVRQVKDFEYEFQMSLLNRQLNPDVTTVFLMPNVKYTYVASSIIREVAMLGGDVHNFVHPNVLEKLHEKYNVCKGQSNT</sequence>
<dbReference type="EC" id="2.7.7.3" evidence="1"/>
<dbReference type="EMBL" id="CP001108">
    <property type="protein sequence ID" value="ACF46392.1"/>
    <property type="molecule type" value="Genomic_DNA"/>
</dbReference>
<dbReference type="RefSeq" id="WP_012505926.1">
    <property type="nucleotide sequence ID" value="NC_011059.1"/>
</dbReference>
<dbReference type="SMR" id="B4S8K5"/>
<dbReference type="STRING" id="290512.Paes_1371"/>
<dbReference type="KEGG" id="paa:Paes_1371"/>
<dbReference type="eggNOG" id="COG0669">
    <property type="taxonomic scope" value="Bacteria"/>
</dbReference>
<dbReference type="HOGENOM" id="CLU_100149_0_1_10"/>
<dbReference type="UniPathway" id="UPA00241">
    <property type="reaction ID" value="UER00355"/>
</dbReference>
<dbReference type="Proteomes" id="UP000002725">
    <property type="component" value="Chromosome"/>
</dbReference>
<dbReference type="GO" id="GO:0005737">
    <property type="term" value="C:cytoplasm"/>
    <property type="evidence" value="ECO:0007669"/>
    <property type="project" value="UniProtKB-SubCell"/>
</dbReference>
<dbReference type="GO" id="GO:0005524">
    <property type="term" value="F:ATP binding"/>
    <property type="evidence" value="ECO:0007669"/>
    <property type="project" value="UniProtKB-KW"/>
</dbReference>
<dbReference type="GO" id="GO:0004595">
    <property type="term" value="F:pantetheine-phosphate adenylyltransferase activity"/>
    <property type="evidence" value="ECO:0007669"/>
    <property type="project" value="UniProtKB-UniRule"/>
</dbReference>
<dbReference type="GO" id="GO:0015937">
    <property type="term" value="P:coenzyme A biosynthetic process"/>
    <property type="evidence" value="ECO:0007669"/>
    <property type="project" value="UniProtKB-UniRule"/>
</dbReference>
<dbReference type="CDD" id="cd02163">
    <property type="entry name" value="PPAT"/>
    <property type="match status" value="1"/>
</dbReference>
<dbReference type="Gene3D" id="3.40.50.620">
    <property type="entry name" value="HUPs"/>
    <property type="match status" value="1"/>
</dbReference>
<dbReference type="HAMAP" id="MF_00151">
    <property type="entry name" value="PPAT_bact"/>
    <property type="match status" value="1"/>
</dbReference>
<dbReference type="InterPro" id="IPR004821">
    <property type="entry name" value="Cyt_trans-like"/>
</dbReference>
<dbReference type="InterPro" id="IPR001980">
    <property type="entry name" value="PPAT"/>
</dbReference>
<dbReference type="InterPro" id="IPR014729">
    <property type="entry name" value="Rossmann-like_a/b/a_fold"/>
</dbReference>
<dbReference type="NCBIfam" id="TIGR01510">
    <property type="entry name" value="coaD_prev_kdtB"/>
    <property type="match status" value="1"/>
</dbReference>
<dbReference type="NCBIfam" id="TIGR00125">
    <property type="entry name" value="cyt_tran_rel"/>
    <property type="match status" value="1"/>
</dbReference>
<dbReference type="PANTHER" id="PTHR21342">
    <property type="entry name" value="PHOSPHOPANTETHEINE ADENYLYLTRANSFERASE"/>
    <property type="match status" value="1"/>
</dbReference>
<dbReference type="PANTHER" id="PTHR21342:SF1">
    <property type="entry name" value="PHOSPHOPANTETHEINE ADENYLYLTRANSFERASE"/>
    <property type="match status" value="1"/>
</dbReference>
<dbReference type="Pfam" id="PF01467">
    <property type="entry name" value="CTP_transf_like"/>
    <property type="match status" value="1"/>
</dbReference>
<dbReference type="PRINTS" id="PR01020">
    <property type="entry name" value="LPSBIOSNTHSS"/>
</dbReference>
<dbReference type="SUPFAM" id="SSF52374">
    <property type="entry name" value="Nucleotidylyl transferase"/>
    <property type="match status" value="1"/>
</dbReference>
<organism>
    <name type="scientific">Prosthecochloris aestuarii (strain DSM 271 / SK 413)</name>
    <dbReference type="NCBI Taxonomy" id="290512"/>
    <lineage>
        <taxon>Bacteria</taxon>
        <taxon>Pseudomonadati</taxon>
        <taxon>Chlorobiota</taxon>
        <taxon>Chlorobiia</taxon>
        <taxon>Chlorobiales</taxon>
        <taxon>Chlorobiaceae</taxon>
        <taxon>Prosthecochloris</taxon>
    </lineage>
</organism>
<accession>B4S8K5</accession>